<comment type="subcellular location">
    <subcellularLocation>
        <location>Plastid</location>
        <location>Chloroplast</location>
    </subcellularLocation>
</comment>
<comment type="similarity">
    <text evidence="1">Belongs to the bacterial ribosomal protein bL36 family.</text>
</comment>
<proteinExistence type="inferred from homology"/>
<dbReference type="EMBL" id="AP009368">
    <property type="protein sequence ID" value="BAF49973.1"/>
    <property type="molecule type" value="Genomic_DNA"/>
</dbReference>
<dbReference type="RefSeq" id="YP_001123149.1">
    <property type="nucleotide sequence ID" value="NC_009267.1"/>
</dbReference>
<dbReference type="SMR" id="A4QJW5"/>
<dbReference type="GeneID" id="4962384"/>
<dbReference type="GO" id="GO:0009507">
    <property type="term" value="C:chloroplast"/>
    <property type="evidence" value="ECO:0007669"/>
    <property type="project" value="UniProtKB-SubCell"/>
</dbReference>
<dbReference type="GO" id="GO:1990904">
    <property type="term" value="C:ribonucleoprotein complex"/>
    <property type="evidence" value="ECO:0007669"/>
    <property type="project" value="UniProtKB-KW"/>
</dbReference>
<dbReference type="GO" id="GO:0005840">
    <property type="term" value="C:ribosome"/>
    <property type="evidence" value="ECO:0007669"/>
    <property type="project" value="UniProtKB-KW"/>
</dbReference>
<dbReference type="GO" id="GO:0003735">
    <property type="term" value="F:structural constituent of ribosome"/>
    <property type="evidence" value="ECO:0007669"/>
    <property type="project" value="InterPro"/>
</dbReference>
<dbReference type="GO" id="GO:0006412">
    <property type="term" value="P:translation"/>
    <property type="evidence" value="ECO:0007669"/>
    <property type="project" value="UniProtKB-UniRule"/>
</dbReference>
<dbReference type="HAMAP" id="MF_00251">
    <property type="entry name" value="Ribosomal_bL36"/>
    <property type="match status" value="1"/>
</dbReference>
<dbReference type="InterPro" id="IPR000473">
    <property type="entry name" value="Ribosomal_bL36"/>
</dbReference>
<dbReference type="InterPro" id="IPR035977">
    <property type="entry name" value="Ribosomal_bL36_sp"/>
</dbReference>
<dbReference type="NCBIfam" id="TIGR01022">
    <property type="entry name" value="rpmJ_bact"/>
    <property type="match status" value="1"/>
</dbReference>
<dbReference type="PANTHER" id="PTHR42888">
    <property type="entry name" value="50S RIBOSOMAL PROTEIN L36, CHLOROPLASTIC"/>
    <property type="match status" value="1"/>
</dbReference>
<dbReference type="PANTHER" id="PTHR42888:SF1">
    <property type="entry name" value="LARGE RIBOSOMAL SUBUNIT PROTEIN BL36C"/>
    <property type="match status" value="1"/>
</dbReference>
<dbReference type="Pfam" id="PF00444">
    <property type="entry name" value="Ribosomal_L36"/>
    <property type="match status" value="1"/>
</dbReference>
<dbReference type="SUPFAM" id="SSF57840">
    <property type="entry name" value="Ribosomal protein L36"/>
    <property type="match status" value="1"/>
</dbReference>
<dbReference type="PROSITE" id="PS00828">
    <property type="entry name" value="RIBOSOMAL_L36"/>
    <property type="match status" value="1"/>
</dbReference>
<feature type="chain" id="PRO_0000344777" description="Large ribosomal subunit protein bL36c">
    <location>
        <begin position="1"/>
        <end position="37"/>
    </location>
</feature>
<protein>
    <recommendedName>
        <fullName evidence="1">Large ribosomal subunit protein bL36c</fullName>
    </recommendedName>
    <alternativeName>
        <fullName evidence="2">50S ribosomal protein L36, chloroplastic</fullName>
    </alternativeName>
</protein>
<sequence length="37" mass="4460">MKIRASVRKICEKCRLIRRRGRIIVICSNPRHKQRQG</sequence>
<gene>
    <name evidence="1" type="primary">rpl36</name>
</gene>
<reference key="1">
    <citation type="submission" date="2007-03" db="EMBL/GenBank/DDBJ databases">
        <title>Sequence analysis of Arabidopsis pumila JS2 chloroplast DNA.</title>
        <authorList>
            <person name="Hosouchi T."/>
            <person name="Tsuruoka H."/>
            <person name="Kotani H."/>
        </authorList>
    </citation>
    <scope>NUCLEOTIDE SEQUENCE [LARGE SCALE GENOMIC DNA]</scope>
</reference>
<evidence type="ECO:0000255" key="1">
    <source>
        <dbReference type="HAMAP-Rule" id="MF_00251"/>
    </source>
</evidence>
<evidence type="ECO:0000305" key="2"/>
<geneLocation type="chloroplast"/>
<keyword id="KW-0150">Chloroplast</keyword>
<keyword id="KW-0934">Plastid</keyword>
<keyword id="KW-0687">Ribonucleoprotein</keyword>
<keyword id="KW-0689">Ribosomal protein</keyword>
<name>RK36_OLIPU</name>
<accession>A4QJW5</accession>
<organism>
    <name type="scientific">Olimarabidopsis pumila</name>
    <name type="common">Dwarf rocket</name>
    <name type="synonym">Arabidopsis griffithiana</name>
    <dbReference type="NCBI Taxonomy" id="74718"/>
    <lineage>
        <taxon>Eukaryota</taxon>
        <taxon>Viridiplantae</taxon>
        <taxon>Streptophyta</taxon>
        <taxon>Embryophyta</taxon>
        <taxon>Tracheophyta</taxon>
        <taxon>Spermatophyta</taxon>
        <taxon>Magnoliopsida</taxon>
        <taxon>eudicotyledons</taxon>
        <taxon>Gunneridae</taxon>
        <taxon>Pentapetalae</taxon>
        <taxon>rosids</taxon>
        <taxon>malvids</taxon>
        <taxon>Brassicales</taxon>
        <taxon>Brassicaceae</taxon>
        <taxon>Alyssopsideae</taxon>
        <taxon>Olimarabidopsis</taxon>
    </lineage>
</organism>